<sequence length="399" mass="42473">MATASSSDDAGAAMSISIANSSKRPIATTKTAASIPPYATLAFGALSGFASCVLLQPFDLLKTRLQQLDHRPLSPVSNKSISKPQYASRTQKLVAITKDIVHTHGYQGLWRGTAPTVIRNVPGVALYFYSVSHLRSVASQRQIPLISVAIPSDASSNTSTLAKLSTTGNLLTGAVARVTVGFILSPVTVVKARFESSNFSAATERTLLSSMREIRAQSGFRGFFQGFTATALRDAPYAGLYLALYEACKTNLAGLSRSMDGGLGTGNWMVVSASGLLAGTLATLLTHPFDIIKTRMQTTPADTLHQIALAHDPKSTLSPSVLRDSLKPSVWGMTKHLWASSGPRALLDGLGLRCARKAASSAIGWSIFERGRSWYTEREASSSAQEAGTGTRLLDHKQV</sequence>
<dbReference type="EMBL" id="CM003142">
    <property type="protein sequence ID" value="KIS70633.1"/>
    <property type="molecule type" value="Genomic_DNA"/>
</dbReference>
<dbReference type="RefSeq" id="XP_011388010.1">
    <property type="nucleotide sequence ID" value="XM_011389708.1"/>
</dbReference>
<dbReference type="SMR" id="Q4PDL5"/>
<dbReference type="FunCoup" id="Q4PDL5">
    <property type="interactions" value="144"/>
</dbReference>
<dbReference type="STRING" id="237631.Q4PDL5"/>
<dbReference type="EnsemblFungi" id="KIS70633">
    <property type="protein sequence ID" value="KIS70633"/>
    <property type="gene ID" value="UMAG_10880"/>
</dbReference>
<dbReference type="GeneID" id="23566850"/>
<dbReference type="KEGG" id="uma:UMAG_10880"/>
<dbReference type="VEuPathDB" id="FungiDB:UMAG_10880"/>
<dbReference type="InParanoid" id="Q4PDL5"/>
<dbReference type="OrthoDB" id="1924968at2759"/>
<dbReference type="Proteomes" id="UP000000561">
    <property type="component" value="Chromosome 3"/>
</dbReference>
<dbReference type="GO" id="GO:0005743">
    <property type="term" value="C:mitochondrial inner membrane"/>
    <property type="evidence" value="ECO:0007669"/>
    <property type="project" value="UniProtKB-SubCell"/>
</dbReference>
<dbReference type="GO" id="GO:0005739">
    <property type="term" value="C:mitochondrion"/>
    <property type="evidence" value="ECO:0000318"/>
    <property type="project" value="GO_Central"/>
</dbReference>
<dbReference type="GO" id="GO:0015187">
    <property type="term" value="F:glycine transmembrane transporter activity"/>
    <property type="evidence" value="ECO:0000318"/>
    <property type="project" value="GO_Central"/>
</dbReference>
<dbReference type="GO" id="GO:1904983">
    <property type="term" value="P:glycine import into mitochondrion"/>
    <property type="evidence" value="ECO:0000318"/>
    <property type="project" value="GO_Central"/>
</dbReference>
<dbReference type="Gene3D" id="1.50.40.10">
    <property type="entry name" value="Mitochondrial carrier domain"/>
    <property type="match status" value="2"/>
</dbReference>
<dbReference type="HAMAP" id="MF_03064">
    <property type="entry name" value="SLC25A38"/>
    <property type="match status" value="1"/>
</dbReference>
<dbReference type="InterPro" id="IPR030847">
    <property type="entry name" value="Hem25/SLC25A38"/>
</dbReference>
<dbReference type="InterPro" id="IPR002067">
    <property type="entry name" value="Mit_carrier"/>
</dbReference>
<dbReference type="InterPro" id="IPR018108">
    <property type="entry name" value="Mitochondrial_sb/sol_carrier"/>
</dbReference>
<dbReference type="InterPro" id="IPR023395">
    <property type="entry name" value="Mt_carrier_dom_sf"/>
</dbReference>
<dbReference type="PANTHER" id="PTHR46181">
    <property type="entry name" value="MITOCHONDRIAL GLYCINE TRANSPORTER"/>
    <property type="match status" value="1"/>
</dbReference>
<dbReference type="PANTHER" id="PTHR46181:SF3">
    <property type="entry name" value="MITOCHONDRIAL GLYCINE TRANSPORTER"/>
    <property type="match status" value="1"/>
</dbReference>
<dbReference type="Pfam" id="PF00153">
    <property type="entry name" value="Mito_carr"/>
    <property type="match status" value="3"/>
</dbReference>
<dbReference type="PRINTS" id="PR00926">
    <property type="entry name" value="MITOCARRIER"/>
</dbReference>
<dbReference type="SUPFAM" id="SSF103506">
    <property type="entry name" value="Mitochondrial carrier"/>
    <property type="match status" value="1"/>
</dbReference>
<dbReference type="PROSITE" id="PS50920">
    <property type="entry name" value="SOLCAR"/>
    <property type="match status" value="3"/>
</dbReference>
<gene>
    <name type="ORF">UMAG_10880</name>
</gene>
<name>S2538_MYCMD</name>
<reference key="1">
    <citation type="journal article" date="2006" name="Nature">
        <title>Insights from the genome of the biotrophic fungal plant pathogen Ustilago maydis.</title>
        <authorList>
            <person name="Kaemper J."/>
            <person name="Kahmann R."/>
            <person name="Boelker M."/>
            <person name="Ma L.-J."/>
            <person name="Brefort T."/>
            <person name="Saville B.J."/>
            <person name="Banuett F."/>
            <person name="Kronstad J.W."/>
            <person name="Gold S.E."/>
            <person name="Mueller O."/>
            <person name="Perlin M.H."/>
            <person name="Woesten H.A.B."/>
            <person name="de Vries R."/>
            <person name="Ruiz-Herrera J."/>
            <person name="Reynaga-Pena C.G."/>
            <person name="Snetselaar K."/>
            <person name="McCann M."/>
            <person name="Perez-Martin J."/>
            <person name="Feldbruegge M."/>
            <person name="Basse C.W."/>
            <person name="Steinberg G."/>
            <person name="Ibeas J.I."/>
            <person name="Holloman W."/>
            <person name="Guzman P."/>
            <person name="Farman M.L."/>
            <person name="Stajich J.E."/>
            <person name="Sentandreu R."/>
            <person name="Gonzalez-Prieto J.M."/>
            <person name="Kennell J.C."/>
            <person name="Molina L."/>
            <person name="Schirawski J."/>
            <person name="Mendoza-Mendoza A."/>
            <person name="Greilinger D."/>
            <person name="Muench K."/>
            <person name="Roessel N."/>
            <person name="Scherer M."/>
            <person name="Vranes M."/>
            <person name="Ladendorf O."/>
            <person name="Vincon V."/>
            <person name="Fuchs U."/>
            <person name="Sandrock B."/>
            <person name="Meng S."/>
            <person name="Ho E.C.H."/>
            <person name="Cahill M.J."/>
            <person name="Boyce K.J."/>
            <person name="Klose J."/>
            <person name="Klosterman S.J."/>
            <person name="Deelstra H.J."/>
            <person name="Ortiz-Castellanos L."/>
            <person name="Li W."/>
            <person name="Sanchez-Alonso P."/>
            <person name="Schreier P.H."/>
            <person name="Haeuser-Hahn I."/>
            <person name="Vaupel M."/>
            <person name="Koopmann E."/>
            <person name="Friedrich G."/>
            <person name="Voss H."/>
            <person name="Schlueter T."/>
            <person name="Margolis J."/>
            <person name="Platt D."/>
            <person name="Swimmer C."/>
            <person name="Gnirke A."/>
            <person name="Chen F."/>
            <person name="Vysotskaia V."/>
            <person name="Mannhaupt G."/>
            <person name="Gueldener U."/>
            <person name="Muensterkoetter M."/>
            <person name="Haase D."/>
            <person name="Oesterheld M."/>
            <person name="Mewes H.-W."/>
            <person name="Mauceli E.W."/>
            <person name="DeCaprio D."/>
            <person name="Wade C.M."/>
            <person name="Butler J."/>
            <person name="Young S.K."/>
            <person name="Jaffe D.B."/>
            <person name="Calvo S.E."/>
            <person name="Nusbaum C."/>
            <person name="Galagan J.E."/>
            <person name="Birren B.W."/>
        </authorList>
    </citation>
    <scope>NUCLEOTIDE SEQUENCE [LARGE SCALE GENOMIC DNA]</scope>
    <source>
        <strain>DSM 14603 / FGSC 9021 / UM521</strain>
    </source>
</reference>
<reference key="2">
    <citation type="submission" date="2014-09" db="EMBL/GenBank/DDBJ databases">
        <authorList>
            <person name="Gueldener U."/>
            <person name="Muensterkoetter M."/>
            <person name="Walter M.C."/>
            <person name="Mannhaupt G."/>
            <person name="Kahmann R."/>
        </authorList>
    </citation>
    <scope>GENOME REANNOTATION</scope>
    <source>
        <strain>DSM 14603 / FGSC 9021 / UM521</strain>
    </source>
</reference>
<organism>
    <name type="scientific">Mycosarcoma maydis</name>
    <name type="common">Corn smut fungus</name>
    <name type="synonym">Ustilago maydis</name>
    <dbReference type="NCBI Taxonomy" id="5270"/>
    <lineage>
        <taxon>Eukaryota</taxon>
        <taxon>Fungi</taxon>
        <taxon>Dikarya</taxon>
        <taxon>Basidiomycota</taxon>
        <taxon>Ustilaginomycotina</taxon>
        <taxon>Ustilaginomycetes</taxon>
        <taxon>Ustilaginales</taxon>
        <taxon>Ustilaginaceae</taxon>
        <taxon>Mycosarcoma</taxon>
    </lineage>
</organism>
<accession>Q4PDL5</accession>
<accession>A0A0D1CW78</accession>
<proteinExistence type="inferred from homology"/>
<comment type="function">
    <text evidence="2">Mitochondrial glycine transporter that imports glycine into the mitochondrial matrix. Plays an important role in providing glycine for the first enzymatic step in heme biosynthesis, the condensation of glycine with succinyl-CoA to produce 5-aminolevulinate (ALA) in the mitochondrial matrix.</text>
</comment>
<comment type="catalytic activity">
    <reaction evidence="1">
        <text>glycine(in) = glycine(out)</text>
        <dbReference type="Rhea" id="RHEA:70715"/>
        <dbReference type="ChEBI" id="CHEBI:57305"/>
    </reaction>
</comment>
<comment type="subcellular location">
    <subcellularLocation>
        <location evidence="2">Mitochondrion inner membrane</location>
        <topology evidence="2">Multi-pass membrane protein</topology>
    </subcellularLocation>
</comment>
<comment type="similarity">
    <text evidence="2">Belongs to the mitochondrial carrier (TC 2.A.29) family. SLC25A38 subfamily.</text>
</comment>
<keyword id="KW-0472">Membrane</keyword>
<keyword id="KW-0496">Mitochondrion</keyword>
<keyword id="KW-0999">Mitochondrion inner membrane</keyword>
<keyword id="KW-1185">Reference proteome</keyword>
<keyword id="KW-0677">Repeat</keyword>
<keyword id="KW-0812">Transmembrane</keyword>
<keyword id="KW-1133">Transmembrane helix</keyword>
<keyword id="KW-0813">Transport</keyword>
<feature type="chain" id="PRO_0000425267" description="Mitochondrial glycine transporter">
    <location>
        <begin position="1"/>
        <end position="399"/>
    </location>
</feature>
<feature type="transmembrane region" description="Helical; Name=1" evidence="2">
    <location>
        <begin position="41"/>
        <end position="66"/>
    </location>
</feature>
<feature type="transmembrane region" description="Helical; Name=2" evidence="2">
    <location>
        <begin position="112"/>
        <end position="138"/>
    </location>
</feature>
<feature type="transmembrane region" description="Helical; Name=3" evidence="2">
    <location>
        <begin position="170"/>
        <end position="195"/>
    </location>
</feature>
<feature type="transmembrane region" description="Helical; Name=4" evidence="2">
    <location>
        <begin position="226"/>
        <end position="249"/>
    </location>
</feature>
<feature type="transmembrane region" description="Helical; Name=5" evidence="2">
    <location>
        <begin position="270"/>
        <end position="296"/>
    </location>
</feature>
<feature type="transmembrane region" description="Helical; Name=6" evidence="2">
    <location>
        <begin position="349"/>
        <end position="367"/>
    </location>
</feature>
<feature type="repeat" description="Solcar 1" evidence="2">
    <location>
        <begin position="35"/>
        <end position="137"/>
    </location>
</feature>
<feature type="repeat" description="Solcar 2" evidence="2">
    <location>
        <begin position="164"/>
        <end position="251"/>
    </location>
</feature>
<feature type="repeat" description="Solcar 3" evidence="2">
    <location>
        <begin position="266"/>
        <end position="374"/>
    </location>
</feature>
<feature type="region of interest" description="Disordered" evidence="3">
    <location>
        <begin position="379"/>
        <end position="399"/>
    </location>
</feature>
<protein>
    <recommendedName>
        <fullName evidence="2">Mitochondrial glycine transporter</fullName>
    </recommendedName>
    <alternativeName>
        <fullName evidence="2">Solute carrier family 25 member 38 homolog</fullName>
    </alternativeName>
</protein>
<evidence type="ECO:0000250" key="1">
    <source>
        <dbReference type="UniProtKB" id="Q96DW6"/>
    </source>
</evidence>
<evidence type="ECO:0000255" key="2">
    <source>
        <dbReference type="HAMAP-Rule" id="MF_03064"/>
    </source>
</evidence>
<evidence type="ECO:0000256" key="3">
    <source>
        <dbReference type="SAM" id="MobiDB-lite"/>
    </source>
</evidence>